<feature type="chain" id="PRO_0000305801" description="Bifunctional protein FolD">
    <location>
        <begin position="1"/>
        <end position="284"/>
    </location>
</feature>
<feature type="binding site" evidence="1">
    <location>
        <begin position="166"/>
        <end position="168"/>
    </location>
    <ligand>
        <name>NADP(+)</name>
        <dbReference type="ChEBI" id="CHEBI:58349"/>
    </ligand>
</feature>
<feature type="binding site" evidence="1">
    <location>
        <position position="232"/>
    </location>
    <ligand>
        <name>NADP(+)</name>
        <dbReference type="ChEBI" id="CHEBI:58349"/>
    </ligand>
</feature>
<reference key="1">
    <citation type="journal article" date="2006" name="Science">
        <title>A small microbial genome: the end of a long symbiotic relationship?</title>
        <authorList>
            <person name="Perez-Brocal V."/>
            <person name="Gil R."/>
            <person name="Ramos S."/>
            <person name="Lamelas A."/>
            <person name="Postigo M."/>
            <person name="Michelena J.M."/>
            <person name="Silva F.J."/>
            <person name="Moya A."/>
            <person name="Latorre A."/>
        </authorList>
    </citation>
    <scope>NUCLEOTIDE SEQUENCE [LARGE SCALE GENOMIC DNA]</scope>
    <source>
        <strain>Cc</strain>
    </source>
</reference>
<sequence length="284" mass="31856">METKILDGLKISKKIIKKIKKKIEKRKKKRKKIPGLAMIVIGNNPASLIYVNKKREACNQAGFFSIYWHLSNQIEEIELINLIKKLNKNKCIDGILIQLPLPIKINYLKIITSIDPKKDVDGFHPYNLGSLCQNNPQFRSCTSKGVITLLKKYKINIHGLYAVIIGSSNIVGKPMYMELLLAGCTVTIVNKNTKNIKTYVKKADLVVIAIGQPNFLYGHWIKLGAIVIDIGINYLYNKNKYKIVGDVHFKSTSVKTSYITPVPGGVGPMTVVSLLENTLQACIM</sequence>
<evidence type="ECO:0000255" key="1">
    <source>
        <dbReference type="HAMAP-Rule" id="MF_01576"/>
    </source>
</evidence>
<name>FOLD_BUCCC</name>
<accession>Q057D7</accession>
<protein>
    <recommendedName>
        <fullName evidence="1">Bifunctional protein FolD</fullName>
    </recommendedName>
    <domain>
        <recommendedName>
            <fullName evidence="1">Methylenetetrahydrofolate dehydrogenase</fullName>
            <ecNumber evidence="1">1.5.1.5</ecNumber>
        </recommendedName>
    </domain>
    <domain>
        <recommendedName>
            <fullName evidence="1">Methenyltetrahydrofolate cyclohydrolase</fullName>
            <ecNumber evidence="1">3.5.4.9</ecNumber>
        </recommendedName>
    </domain>
</protein>
<organism>
    <name type="scientific">Buchnera aphidicola subsp. Cinara cedri (strain Cc)</name>
    <dbReference type="NCBI Taxonomy" id="372461"/>
    <lineage>
        <taxon>Bacteria</taxon>
        <taxon>Pseudomonadati</taxon>
        <taxon>Pseudomonadota</taxon>
        <taxon>Gammaproteobacteria</taxon>
        <taxon>Enterobacterales</taxon>
        <taxon>Erwiniaceae</taxon>
        <taxon>Buchnera</taxon>
    </lineage>
</organism>
<comment type="function">
    <text evidence="1">Catalyzes the oxidation of 5,10-methylenetetrahydrofolate to 5,10-methenyltetrahydrofolate and then the hydrolysis of 5,10-methenyltetrahydrofolate to 10-formyltetrahydrofolate.</text>
</comment>
<comment type="catalytic activity">
    <reaction evidence="1">
        <text>(6R)-5,10-methylene-5,6,7,8-tetrahydrofolate + NADP(+) = (6R)-5,10-methenyltetrahydrofolate + NADPH</text>
        <dbReference type="Rhea" id="RHEA:22812"/>
        <dbReference type="ChEBI" id="CHEBI:15636"/>
        <dbReference type="ChEBI" id="CHEBI:57455"/>
        <dbReference type="ChEBI" id="CHEBI:57783"/>
        <dbReference type="ChEBI" id="CHEBI:58349"/>
        <dbReference type="EC" id="1.5.1.5"/>
    </reaction>
</comment>
<comment type="catalytic activity">
    <reaction evidence="1">
        <text>(6R)-5,10-methenyltetrahydrofolate + H2O = (6R)-10-formyltetrahydrofolate + H(+)</text>
        <dbReference type="Rhea" id="RHEA:23700"/>
        <dbReference type="ChEBI" id="CHEBI:15377"/>
        <dbReference type="ChEBI" id="CHEBI:15378"/>
        <dbReference type="ChEBI" id="CHEBI:57455"/>
        <dbReference type="ChEBI" id="CHEBI:195366"/>
        <dbReference type="EC" id="3.5.4.9"/>
    </reaction>
</comment>
<comment type="pathway">
    <text evidence="1">One-carbon metabolism; tetrahydrofolate interconversion.</text>
</comment>
<comment type="subunit">
    <text evidence="1">Homodimer.</text>
</comment>
<comment type="similarity">
    <text evidence="1">Belongs to the tetrahydrofolate dehydrogenase/cyclohydrolase family.</text>
</comment>
<gene>
    <name evidence="1" type="primary">folD</name>
    <name type="ordered locus">BCc_305</name>
</gene>
<dbReference type="EC" id="1.5.1.5" evidence="1"/>
<dbReference type="EC" id="3.5.4.9" evidence="1"/>
<dbReference type="EMBL" id="CP000263">
    <property type="protein sequence ID" value="ABJ90762.1"/>
    <property type="molecule type" value="Genomic_DNA"/>
</dbReference>
<dbReference type="RefSeq" id="WP_011672681.1">
    <property type="nucleotide sequence ID" value="NC_008513.1"/>
</dbReference>
<dbReference type="SMR" id="Q057D7"/>
<dbReference type="STRING" id="372461.BCc_305"/>
<dbReference type="KEGG" id="bcc:BCc_305"/>
<dbReference type="eggNOG" id="COG0190">
    <property type="taxonomic scope" value="Bacteria"/>
</dbReference>
<dbReference type="HOGENOM" id="CLU_034045_2_1_6"/>
<dbReference type="OrthoDB" id="9803580at2"/>
<dbReference type="UniPathway" id="UPA00193"/>
<dbReference type="Proteomes" id="UP000000669">
    <property type="component" value="Chromosome"/>
</dbReference>
<dbReference type="GO" id="GO:0005829">
    <property type="term" value="C:cytosol"/>
    <property type="evidence" value="ECO:0007669"/>
    <property type="project" value="TreeGrafter"/>
</dbReference>
<dbReference type="GO" id="GO:0004477">
    <property type="term" value="F:methenyltetrahydrofolate cyclohydrolase activity"/>
    <property type="evidence" value="ECO:0007669"/>
    <property type="project" value="UniProtKB-UniRule"/>
</dbReference>
<dbReference type="GO" id="GO:0004488">
    <property type="term" value="F:methylenetetrahydrofolate dehydrogenase (NADP+) activity"/>
    <property type="evidence" value="ECO:0007669"/>
    <property type="project" value="UniProtKB-UniRule"/>
</dbReference>
<dbReference type="GO" id="GO:0000105">
    <property type="term" value="P:L-histidine biosynthetic process"/>
    <property type="evidence" value="ECO:0007669"/>
    <property type="project" value="UniProtKB-KW"/>
</dbReference>
<dbReference type="GO" id="GO:0009086">
    <property type="term" value="P:methionine biosynthetic process"/>
    <property type="evidence" value="ECO:0007669"/>
    <property type="project" value="UniProtKB-KW"/>
</dbReference>
<dbReference type="GO" id="GO:0006164">
    <property type="term" value="P:purine nucleotide biosynthetic process"/>
    <property type="evidence" value="ECO:0007669"/>
    <property type="project" value="UniProtKB-KW"/>
</dbReference>
<dbReference type="GO" id="GO:0035999">
    <property type="term" value="P:tetrahydrofolate interconversion"/>
    <property type="evidence" value="ECO:0007669"/>
    <property type="project" value="UniProtKB-UniRule"/>
</dbReference>
<dbReference type="CDD" id="cd01080">
    <property type="entry name" value="NAD_bind_m-THF_DH_Cyclohyd"/>
    <property type="match status" value="1"/>
</dbReference>
<dbReference type="FunFam" id="3.40.50.720:FF:000006">
    <property type="entry name" value="Bifunctional protein FolD"/>
    <property type="match status" value="1"/>
</dbReference>
<dbReference type="FunFam" id="3.40.50.10860:FF:000005">
    <property type="entry name" value="C-1-tetrahydrofolate synthase, cytoplasmic, putative"/>
    <property type="match status" value="1"/>
</dbReference>
<dbReference type="Gene3D" id="3.40.50.10860">
    <property type="entry name" value="Leucine Dehydrogenase, chain A, domain 1"/>
    <property type="match status" value="1"/>
</dbReference>
<dbReference type="Gene3D" id="3.40.50.720">
    <property type="entry name" value="NAD(P)-binding Rossmann-like Domain"/>
    <property type="match status" value="1"/>
</dbReference>
<dbReference type="HAMAP" id="MF_01576">
    <property type="entry name" value="THF_DHG_CYH"/>
    <property type="match status" value="1"/>
</dbReference>
<dbReference type="InterPro" id="IPR046346">
    <property type="entry name" value="Aminoacid_DH-like_N_sf"/>
</dbReference>
<dbReference type="InterPro" id="IPR036291">
    <property type="entry name" value="NAD(P)-bd_dom_sf"/>
</dbReference>
<dbReference type="InterPro" id="IPR000672">
    <property type="entry name" value="THF_DH/CycHdrlase"/>
</dbReference>
<dbReference type="InterPro" id="IPR020630">
    <property type="entry name" value="THF_DH/CycHdrlase_cat_dom"/>
</dbReference>
<dbReference type="InterPro" id="IPR020867">
    <property type="entry name" value="THF_DH/CycHdrlase_CS"/>
</dbReference>
<dbReference type="InterPro" id="IPR020631">
    <property type="entry name" value="THF_DH/CycHdrlase_NAD-bd_dom"/>
</dbReference>
<dbReference type="NCBIfam" id="NF008058">
    <property type="entry name" value="PRK10792.1"/>
    <property type="match status" value="1"/>
</dbReference>
<dbReference type="PANTHER" id="PTHR48099:SF5">
    <property type="entry name" value="C-1-TETRAHYDROFOLATE SYNTHASE, CYTOPLASMIC"/>
    <property type="match status" value="1"/>
</dbReference>
<dbReference type="PANTHER" id="PTHR48099">
    <property type="entry name" value="C-1-TETRAHYDROFOLATE SYNTHASE, CYTOPLASMIC-RELATED"/>
    <property type="match status" value="1"/>
</dbReference>
<dbReference type="Pfam" id="PF00763">
    <property type="entry name" value="THF_DHG_CYH"/>
    <property type="match status" value="1"/>
</dbReference>
<dbReference type="Pfam" id="PF02882">
    <property type="entry name" value="THF_DHG_CYH_C"/>
    <property type="match status" value="1"/>
</dbReference>
<dbReference type="PRINTS" id="PR00085">
    <property type="entry name" value="THFDHDRGNASE"/>
</dbReference>
<dbReference type="SUPFAM" id="SSF53223">
    <property type="entry name" value="Aminoacid dehydrogenase-like, N-terminal domain"/>
    <property type="match status" value="1"/>
</dbReference>
<dbReference type="SUPFAM" id="SSF51735">
    <property type="entry name" value="NAD(P)-binding Rossmann-fold domains"/>
    <property type="match status" value="1"/>
</dbReference>
<dbReference type="PROSITE" id="PS00766">
    <property type="entry name" value="THF_DHG_CYH_1"/>
    <property type="match status" value="1"/>
</dbReference>
<dbReference type="PROSITE" id="PS00767">
    <property type="entry name" value="THF_DHG_CYH_2"/>
    <property type="match status" value="1"/>
</dbReference>
<keyword id="KW-0028">Amino-acid biosynthesis</keyword>
<keyword id="KW-0368">Histidine biosynthesis</keyword>
<keyword id="KW-0378">Hydrolase</keyword>
<keyword id="KW-0486">Methionine biosynthesis</keyword>
<keyword id="KW-0511">Multifunctional enzyme</keyword>
<keyword id="KW-0521">NADP</keyword>
<keyword id="KW-0554">One-carbon metabolism</keyword>
<keyword id="KW-0560">Oxidoreductase</keyword>
<keyword id="KW-0658">Purine biosynthesis</keyword>
<keyword id="KW-1185">Reference proteome</keyword>
<proteinExistence type="inferred from homology"/>